<keyword id="KW-1185">Reference proteome</keyword>
<gene>
    <name type="ordered locus">BP2767</name>
</gene>
<sequence>MESRLLDILVCPVCKGRLEFQRAQAELVCNADRLAFPVRDGVPIMLEAEARSLDAEAPAQPS</sequence>
<accession>Q7VVB1</accession>
<comment type="similarity">
    <text evidence="1">Belongs to the UPF0434 family.</text>
</comment>
<evidence type="ECO:0000255" key="1">
    <source>
        <dbReference type="HAMAP-Rule" id="MF_01187"/>
    </source>
</evidence>
<feature type="chain" id="PRO_0000291065" description="UPF0434 protein BP2767">
    <location>
        <begin position="1"/>
        <end position="62"/>
    </location>
</feature>
<dbReference type="EMBL" id="BX640419">
    <property type="protein sequence ID" value="CAE43042.1"/>
    <property type="molecule type" value="Genomic_DNA"/>
</dbReference>
<dbReference type="RefSeq" id="NP_881371.1">
    <property type="nucleotide sequence ID" value="NC_002929.2"/>
</dbReference>
<dbReference type="RefSeq" id="WP_003812895.1">
    <property type="nucleotide sequence ID" value="NZ_CP039022.1"/>
</dbReference>
<dbReference type="BMRB" id="Q7VVB1"/>
<dbReference type="SMR" id="Q7VVB1"/>
<dbReference type="STRING" id="257313.BP2767"/>
<dbReference type="PaxDb" id="257313-BP2767"/>
<dbReference type="DNASU" id="2666344"/>
<dbReference type="KEGG" id="bpe:BP2767"/>
<dbReference type="PATRIC" id="fig|257313.5.peg.2985"/>
<dbReference type="eggNOG" id="COG2835">
    <property type="taxonomic scope" value="Bacteria"/>
</dbReference>
<dbReference type="HOGENOM" id="CLU_155659_3_0_4"/>
<dbReference type="Proteomes" id="UP000002676">
    <property type="component" value="Chromosome"/>
</dbReference>
<dbReference type="GO" id="GO:0005829">
    <property type="term" value="C:cytosol"/>
    <property type="evidence" value="ECO:0007669"/>
    <property type="project" value="TreeGrafter"/>
</dbReference>
<dbReference type="FunFam" id="2.20.25.10:FF:000002">
    <property type="entry name" value="UPF0434 protein YcaR"/>
    <property type="match status" value="1"/>
</dbReference>
<dbReference type="Gene3D" id="2.20.25.10">
    <property type="match status" value="1"/>
</dbReference>
<dbReference type="HAMAP" id="MF_01187">
    <property type="entry name" value="UPF0434"/>
    <property type="match status" value="1"/>
</dbReference>
<dbReference type="InterPro" id="IPR005651">
    <property type="entry name" value="Trm112-like"/>
</dbReference>
<dbReference type="PANTHER" id="PTHR33505:SF4">
    <property type="entry name" value="PROTEIN PREY, MITOCHONDRIAL"/>
    <property type="match status" value="1"/>
</dbReference>
<dbReference type="PANTHER" id="PTHR33505">
    <property type="entry name" value="ZGC:162634"/>
    <property type="match status" value="1"/>
</dbReference>
<dbReference type="Pfam" id="PF03966">
    <property type="entry name" value="Trm112p"/>
    <property type="match status" value="1"/>
</dbReference>
<dbReference type="SUPFAM" id="SSF158997">
    <property type="entry name" value="Trm112p-like"/>
    <property type="match status" value="1"/>
</dbReference>
<protein>
    <recommendedName>
        <fullName evidence="1">UPF0434 protein BP2767</fullName>
    </recommendedName>
</protein>
<name>Y2767_BORPE</name>
<reference key="1">
    <citation type="journal article" date="2003" name="Nat. Genet.">
        <title>Comparative analysis of the genome sequences of Bordetella pertussis, Bordetella parapertussis and Bordetella bronchiseptica.</title>
        <authorList>
            <person name="Parkhill J."/>
            <person name="Sebaihia M."/>
            <person name="Preston A."/>
            <person name="Murphy L.D."/>
            <person name="Thomson N.R."/>
            <person name="Harris D.E."/>
            <person name="Holden M.T.G."/>
            <person name="Churcher C.M."/>
            <person name="Bentley S.D."/>
            <person name="Mungall K.L."/>
            <person name="Cerdeno-Tarraga A.-M."/>
            <person name="Temple L."/>
            <person name="James K.D."/>
            <person name="Harris B."/>
            <person name="Quail M.A."/>
            <person name="Achtman M."/>
            <person name="Atkin R."/>
            <person name="Baker S."/>
            <person name="Basham D."/>
            <person name="Bason N."/>
            <person name="Cherevach I."/>
            <person name="Chillingworth T."/>
            <person name="Collins M."/>
            <person name="Cronin A."/>
            <person name="Davis P."/>
            <person name="Doggett J."/>
            <person name="Feltwell T."/>
            <person name="Goble A."/>
            <person name="Hamlin N."/>
            <person name="Hauser H."/>
            <person name="Holroyd S."/>
            <person name="Jagels K."/>
            <person name="Leather S."/>
            <person name="Moule S."/>
            <person name="Norberczak H."/>
            <person name="O'Neil S."/>
            <person name="Ormond D."/>
            <person name="Price C."/>
            <person name="Rabbinowitsch E."/>
            <person name="Rutter S."/>
            <person name="Sanders M."/>
            <person name="Saunders D."/>
            <person name="Seeger K."/>
            <person name="Sharp S."/>
            <person name="Simmonds M."/>
            <person name="Skelton J."/>
            <person name="Squares R."/>
            <person name="Squares S."/>
            <person name="Stevens K."/>
            <person name="Unwin L."/>
            <person name="Whitehead S."/>
            <person name="Barrell B.G."/>
            <person name="Maskell D.J."/>
        </authorList>
    </citation>
    <scope>NUCLEOTIDE SEQUENCE [LARGE SCALE GENOMIC DNA]</scope>
    <source>
        <strain>Tohama I / ATCC BAA-589 / NCTC 13251</strain>
    </source>
</reference>
<organism>
    <name type="scientific">Bordetella pertussis (strain Tohama I / ATCC BAA-589 / NCTC 13251)</name>
    <dbReference type="NCBI Taxonomy" id="257313"/>
    <lineage>
        <taxon>Bacteria</taxon>
        <taxon>Pseudomonadati</taxon>
        <taxon>Pseudomonadota</taxon>
        <taxon>Betaproteobacteria</taxon>
        <taxon>Burkholderiales</taxon>
        <taxon>Alcaligenaceae</taxon>
        <taxon>Bordetella</taxon>
    </lineage>
</organism>
<proteinExistence type="inferred from homology"/>